<accession>P67901</accession>
<accession>O68928</accession>
<accession>P44378</accession>
<accession>Q9CL31</accession>
<gene>
    <name evidence="1" type="primary">rpsJ</name>
    <name evidence="1" type="synonym">rps10</name>
    <name type="ordered locus">HI_0776</name>
</gene>
<name>RS10_HAEIN</name>
<feature type="chain" id="PRO_0000146537" description="Small ribosomal subunit protein uS10">
    <location>
        <begin position="1"/>
        <end position="103"/>
    </location>
</feature>
<comment type="function">
    <text evidence="1">Involved in the binding of tRNA to the ribosomes.</text>
</comment>
<comment type="subunit">
    <text evidence="1">Part of the 30S ribosomal subunit.</text>
</comment>
<comment type="similarity">
    <text evidence="1">Belongs to the universal ribosomal protein uS10 family.</text>
</comment>
<comment type="sequence caution" evidence="2">
    <conflict type="erroneous initiation">
        <sequence resource="EMBL-CDS" id="AAC22435"/>
    </conflict>
</comment>
<protein>
    <recommendedName>
        <fullName evidence="1">Small ribosomal subunit protein uS10</fullName>
    </recommendedName>
    <alternativeName>
        <fullName evidence="2">30S ribosomal protein S10</fullName>
    </alternativeName>
</protein>
<keyword id="KW-1185">Reference proteome</keyword>
<keyword id="KW-0687">Ribonucleoprotein</keyword>
<keyword id="KW-0689">Ribosomal protein</keyword>
<organism>
    <name type="scientific">Haemophilus influenzae (strain ATCC 51907 / DSM 11121 / KW20 / Rd)</name>
    <dbReference type="NCBI Taxonomy" id="71421"/>
    <lineage>
        <taxon>Bacteria</taxon>
        <taxon>Pseudomonadati</taxon>
        <taxon>Pseudomonadota</taxon>
        <taxon>Gammaproteobacteria</taxon>
        <taxon>Pasteurellales</taxon>
        <taxon>Pasteurellaceae</taxon>
        <taxon>Haemophilus</taxon>
    </lineage>
</organism>
<proteinExistence type="inferred from homology"/>
<dbReference type="EMBL" id="L42023">
    <property type="protein sequence ID" value="AAC22435.1"/>
    <property type="status" value="ALT_INIT"/>
    <property type="molecule type" value="Genomic_DNA"/>
</dbReference>
<dbReference type="PIR" id="D64092">
    <property type="entry name" value="D64092"/>
</dbReference>
<dbReference type="RefSeq" id="NP_438935.2">
    <property type="nucleotide sequence ID" value="NC_000907.1"/>
</dbReference>
<dbReference type="SMR" id="P67901"/>
<dbReference type="STRING" id="71421.HI_0776"/>
<dbReference type="EnsemblBacteria" id="AAC22435">
    <property type="protein sequence ID" value="AAC22435"/>
    <property type="gene ID" value="HI_0776"/>
</dbReference>
<dbReference type="KEGG" id="hin:HI_0776"/>
<dbReference type="PATRIC" id="fig|71421.8.peg.815"/>
<dbReference type="eggNOG" id="COG0051">
    <property type="taxonomic scope" value="Bacteria"/>
</dbReference>
<dbReference type="HOGENOM" id="CLU_122625_1_3_6"/>
<dbReference type="OrthoDB" id="9804464at2"/>
<dbReference type="PhylomeDB" id="P67901"/>
<dbReference type="BioCyc" id="HINF71421:G1GJ1-816-MONOMER"/>
<dbReference type="PRO" id="PR:P67901"/>
<dbReference type="Proteomes" id="UP000000579">
    <property type="component" value="Chromosome"/>
</dbReference>
<dbReference type="GO" id="GO:0015935">
    <property type="term" value="C:small ribosomal subunit"/>
    <property type="evidence" value="ECO:0000318"/>
    <property type="project" value="GO_Central"/>
</dbReference>
<dbReference type="GO" id="GO:0003735">
    <property type="term" value="F:structural constituent of ribosome"/>
    <property type="evidence" value="ECO:0000318"/>
    <property type="project" value="GO_Central"/>
</dbReference>
<dbReference type="GO" id="GO:0000049">
    <property type="term" value="F:tRNA binding"/>
    <property type="evidence" value="ECO:0007669"/>
    <property type="project" value="UniProtKB-UniRule"/>
</dbReference>
<dbReference type="GO" id="GO:0006412">
    <property type="term" value="P:translation"/>
    <property type="evidence" value="ECO:0007669"/>
    <property type="project" value="UniProtKB-UniRule"/>
</dbReference>
<dbReference type="FunFam" id="3.30.70.600:FF:000001">
    <property type="entry name" value="30S ribosomal protein S10"/>
    <property type="match status" value="1"/>
</dbReference>
<dbReference type="Gene3D" id="3.30.70.600">
    <property type="entry name" value="Ribosomal protein S10 domain"/>
    <property type="match status" value="1"/>
</dbReference>
<dbReference type="HAMAP" id="MF_00508">
    <property type="entry name" value="Ribosomal_uS10"/>
    <property type="match status" value="1"/>
</dbReference>
<dbReference type="InterPro" id="IPR001848">
    <property type="entry name" value="Ribosomal_uS10"/>
</dbReference>
<dbReference type="InterPro" id="IPR018268">
    <property type="entry name" value="Ribosomal_uS10_CS"/>
</dbReference>
<dbReference type="InterPro" id="IPR027486">
    <property type="entry name" value="Ribosomal_uS10_dom"/>
</dbReference>
<dbReference type="InterPro" id="IPR036838">
    <property type="entry name" value="Ribosomal_uS10_dom_sf"/>
</dbReference>
<dbReference type="NCBIfam" id="NF001861">
    <property type="entry name" value="PRK00596.1"/>
    <property type="match status" value="1"/>
</dbReference>
<dbReference type="NCBIfam" id="TIGR01049">
    <property type="entry name" value="rpsJ_bact"/>
    <property type="match status" value="1"/>
</dbReference>
<dbReference type="PANTHER" id="PTHR11700">
    <property type="entry name" value="30S RIBOSOMAL PROTEIN S10 FAMILY MEMBER"/>
    <property type="match status" value="1"/>
</dbReference>
<dbReference type="Pfam" id="PF00338">
    <property type="entry name" value="Ribosomal_S10"/>
    <property type="match status" value="1"/>
</dbReference>
<dbReference type="PRINTS" id="PR00971">
    <property type="entry name" value="RIBOSOMALS10"/>
</dbReference>
<dbReference type="SMART" id="SM01403">
    <property type="entry name" value="Ribosomal_S10"/>
    <property type="match status" value="1"/>
</dbReference>
<dbReference type="SUPFAM" id="SSF54999">
    <property type="entry name" value="Ribosomal protein S10"/>
    <property type="match status" value="1"/>
</dbReference>
<dbReference type="PROSITE" id="PS00361">
    <property type="entry name" value="RIBOSOMAL_S10"/>
    <property type="match status" value="1"/>
</dbReference>
<sequence>MQNQRIRIRLKAFDHRLIDQSTAEIVETAKRTGAQVRGPIPLPTRKERFTVLISPHVNKDARDQYEIRTHKRLVDIVEPTEKTVDALMRLDLAAGVDVQISLG</sequence>
<reference key="1">
    <citation type="journal article" date="1995" name="Science">
        <title>Whole-genome random sequencing and assembly of Haemophilus influenzae Rd.</title>
        <authorList>
            <person name="Fleischmann R.D."/>
            <person name="Adams M.D."/>
            <person name="White O."/>
            <person name="Clayton R.A."/>
            <person name="Kirkness E.F."/>
            <person name="Kerlavage A.R."/>
            <person name="Bult C.J."/>
            <person name="Tomb J.-F."/>
            <person name="Dougherty B.A."/>
            <person name="Merrick J.M."/>
            <person name="McKenney K."/>
            <person name="Sutton G.G."/>
            <person name="FitzHugh W."/>
            <person name="Fields C.A."/>
            <person name="Gocayne J.D."/>
            <person name="Scott J.D."/>
            <person name="Shirley R."/>
            <person name="Liu L.-I."/>
            <person name="Glodek A."/>
            <person name="Kelley J.M."/>
            <person name="Weidman J.F."/>
            <person name="Phillips C.A."/>
            <person name="Spriggs T."/>
            <person name="Hedblom E."/>
            <person name="Cotton M.D."/>
            <person name="Utterback T.R."/>
            <person name="Hanna M.C."/>
            <person name="Nguyen D.T."/>
            <person name="Saudek D.M."/>
            <person name="Brandon R.C."/>
            <person name="Fine L.D."/>
            <person name="Fritchman J.L."/>
            <person name="Fuhrmann J.L."/>
            <person name="Geoghagen N.S.M."/>
            <person name="Gnehm C.L."/>
            <person name="McDonald L.A."/>
            <person name="Small K.V."/>
            <person name="Fraser C.M."/>
            <person name="Smith H.O."/>
            <person name="Venter J.C."/>
        </authorList>
    </citation>
    <scope>NUCLEOTIDE SEQUENCE [LARGE SCALE GENOMIC DNA]</scope>
    <source>
        <strain>ATCC 51907 / DSM 11121 / KW20 / Rd</strain>
    </source>
</reference>
<evidence type="ECO:0000255" key="1">
    <source>
        <dbReference type="HAMAP-Rule" id="MF_00508"/>
    </source>
</evidence>
<evidence type="ECO:0000305" key="2"/>